<organism>
    <name type="scientific">Psittacid herpesvirus 1 (isolate Amazon parrot/-/97-0001/1997)</name>
    <name type="common">PsHV-1</name>
    <name type="synonym">Pacheco's disease virus</name>
    <dbReference type="NCBI Taxonomy" id="670426"/>
    <lineage>
        <taxon>Viruses</taxon>
        <taxon>Duplodnaviria</taxon>
        <taxon>Heunggongvirae</taxon>
        <taxon>Peploviricota</taxon>
        <taxon>Herviviricetes</taxon>
        <taxon>Herpesvirales</taxon>
        <taxon>Orthoherpesviridae</taxon>
        <taxon>Alphaherpesvirinae</taxon>
        <taxon>Iltovirus</taxon>
        <taxon>Iltovirus psittacidalpha1</taxon>
        <taxon>Psittacid alphaherpesvirus 1</taxon>
    </lineage>
</organism>
<sequence length="880" mass="98512">MCSETGTGVPERNGCADSFSPSVMIARKLYGCDLCERLLTNPRMAGMSLDRQHGHPITFPLPIRTKPVLVARAPMGSGKTTALIDWLTAFLDSEDKSAVIVSCRRSFTNSLSRRFQRDGLTGFTTYLDSDQYVLTEAAHRRLLVQLESLQRISDSLLDRYDVLVVDEVMSIVAQFFSPTMRRLRLVDSMFTSLLRRCRHVIAMDATVNATLVELLAELRGAENVHVVVSDFVSRGFANRECVVMSSLGAALPASMVRYAPPAGDESREASASQPPPHDSSNEPCAPEITDADIESTEGSFFHELHVRLLQGENVCVFSSTLAFSRIVAFFCAEVLSPDAVLLLNSTSPPVDTSDWSRYKVVVYTTVVTVGLSFDDSHFHTMFAFVKPSIHGPDMMAVYQAMGRVRSLIRDRLFMYMDVSSANEGPTFTPMLLNAEIGSATAWPPEILIPANTMCLRFKDRCSSALLDHHRALFSRFKTKHYLERSTLTSANDSFSLLHTLLANNKIAVRMRGDRPDAPASAILVEDFGRFLSRLRTDAFSNRRFLRRITYAIEEAASAMRERVALRNPTAEETVMMLAENQAARSCMERFFGLRGAVDDYGEPIIALMKDMGDVPLVAARLVNAAVIEAGCACSAGEWYVVDLAAEHASHGSSEFDKWMNYYLDEPLVSLKRGRPEEVQIPIQPGIRGRTALLRACVNVARQIGWRPTTWNDDAELEAADVERAMATAIEAGLGKFALEYMRLNFTEPSWLTGPIRNLQRFLGARKRHAAHGIGPSEQRKESPEICIFRTLWAELFGVRILKSQRTFPGTTRVKNLRKEHLKALLDRIEVRYPESSTHKQLYGLLRENQYRFSNSPKLLLRTPDWMRQLSGNRPQAEQAP</sequence>
<reference key="1">
    <citation type="journal article" date="2006" name="J. Virol.">
        <title>Psittacid herpesvirus 1 and infectious laryngotracheitis virus: Comparative genome sequence analysis of two avian alphaherpesviruses.</title>
        <authorList>
            <person name="Thureen D.R."/>
            <person name="Keeler C.L. Jr."/>
        </authorList>
    </citation>
    <scope>NUCLEOTIDE SEQUENCE [LARGE SCALE GENOMIC DNA]</scope>
</reference>
<name>OBP_PSHV1</name>
<keyword id="KW-0067">ATP-binding</keyword>
<keyword id="KW-0235">DNA replication</keyword>
<keyword id="KW-0238">DNA-binding</keyword>
<keyword id="KW-1048">Host nucleus</keyword>
<keyword id="KW-0547">Nucleotide-binding</keyword>
<keyword id="KW-1185">Reference proteome</keyword>
<organismHost>
    <name type="scientific">Amazona oratrix</name>
    <name type="common">yellow-headed parrot</name>
    <dbReference type="NCBI Taxonomy" id="152276"/>
</organismHost>
<feature type="chain" id="PRO_0000406803" description="Replication origin-binding protein">
    <location>
        <begin position="1"/>
        <end position="880"/>
    </location>
</feature>
<feature type="domain" description="Helicase ATP-binding" evidence="2">
    <location>
        <begin position="60"/>
        <end position="225"/>
    </location>
</feature>
<feature type="region of interest" description="Disordered" evidence="3">
    <location>
        <begin position="260"/>
        <end position="287"/>
    </location>
</feature>
<feature type="binding site" evidence="2">
    <location>
        <begin position="73"/>
        <end position="80"/>
    </location>
    <ligand>
        <name>ATP</name>
        <dbReference type="ChEBI" id="CHEBI:30616"/>
    </ligand>
</feature>
<gene>
    <name type="primary">UL9</name>
</gene>
<evidence type="ECO:0000250" key="1"/>
<evidence type="ECO:0000255" key="2">
    <source>
        <dbReference type="PROSITE-ProRule" id="PRU00541"/>
    </source>
</evidence>
<evidence type="ECO:0000256" key="3">
    <source>
        <dbReference type="SAM" id="MobiDB-lite"/>
    </source>
</evidence>
<evidence type="ECO:0000305" key="4"/>
<proteinExistence type="inferred from homology"/>
<accession>Q6UDH3</accession>
<protein>
    <recommendedName>
        <fullName>Replication origin-binding protein</fullName>
        <shortName>OBP</shortName>
    </recommendedName>
    <alternativeName>
        <fullName>OriBP</fullName>
    </alternativeName>
</protein>
<dbReference type="EMBL" id="AY372243">
    <property type="protein sequence ID" value="AAQ73737.1"/>
    <property type="molecule type" value="Genomic_DNA"/>
</dbReference>
<dbReference type="RefSeq" id="NP_944431.1">
    <property type="nucleotide sequence ID" value="NC_005264.1"/>
</dbReference>
<dbReference type="GeneID" id="2657002"/>
<dbReference type="KEGG" id="vg:2657002"/>
<dbReference type="Proteomes" id="UP000006840">
    <property type="component" value="Segment"/>
</dbReference>
<dbReference type="GO" id="GO:0042025">
    <property type="term" value="C:host cell nucleus"/>
    <property type="evidence" value="ECO:0007669"/>
    <property type="project" value="UniProtKB-SubCell"/>
</dbReference>
<dbReference type="GO" id="GO:0005524">
    <property type="term" value="F:ATP binding"/>
    <property type="evidence" value="ECO:0007669"/>
    <property type="project" value="UniProtKB-KW"/>
</dbReference>
<dbReference type="GO" id="GO:0003688">
    <property type="term" value="F:DNA replication origin binding"/>
    <property type="evidence" value="ECO:0007669"/>
    <property type="project" value="InterPro"/>
</dbReference>
<dbReference type="GO" id="GO:0006260">
    <property type="term" value="P:DNA replication"/>
    <property type="evidence" value="ECO:0007669"/>
    <property type="project" value="UniProtKB-KW"/>
</dbReference>
<dbReference type="Gene3D" id="3.40.50.300">
    <property type="entry name" value="P-loop containing nucleotide triphosphate hydrolases"/>
    <property type="match status" value="1"/>
</dbReference>
<dbReference type="InterPro" id="IPR014001">
    <property type="entry name" value="Helicase_ATP-bd"/>
</dbReference>
<dbReference type="InterPro" id="IPR027417">
    <property type="entry name" value="P-loop_NTPase"/>
</dbReference>
<dbReference type="InterPro" id="IPR003450">
    <property type="entry name" value="Replication_origin-bd"/>
</dbReference>
<dbReference type="Pfam" id="PF02399">
    <property type="entry name" value="Herpes_ori_bp"/>
    <property type="match status" value="1"/>
</dbReference>
<dbReference type="SMART" id="SM00487">
    <property type="entry name" value="DEXDc"/>
    <property type="match status" value="1"/>
</dbReference>
<dbReference type="SUPFAM" id="SSF52540">
    <property type="entry name" value="P-loop containing nucleoside triphosphate hydrolases"/>
    <property type="match status" value="1"/>
</dbReference>
<dbReference type="PROSITE" id="PS51192">
    <property type="entry name" value="HELICASE_ATP_BIND_1"/>
    <property type="match status" value="1"/>
</dbReference>
<comment type="function">
    <text evidence="1">Functions as a docking protein to recruit essential components of the viral replication machinery to viral DNA origins. In the presence of the major DNA-binding protein, opens dsDNA leading to a conformational change in the origin that facilitates DNA unwinding and subsequent replication (By similarity).</text>
</comment>
<comment type="subunit">
    <text evidence="1">Homodimer. Interacts with the major DNA-binding protein. Interacts with the DNA helicase/primase complex-associated protein and the polymerase accessory protein (By similarity).</text>
</comment>
<comment type="subcellular location">
    <subcellularLocation>
        <location evidence="4">Host nucleus</location>
    </subcellularLocation>
</comment>
<comment type="similarity">
    <text evidence="4">Belongs to the herpesviridae OriBP family.</text>
</comment>